<comment type="subcellular location">
    <subcellularLocation>
        <location evidence="2">Membrane</location>
        <topology evidence="2">Single-pass membrane protein</topology>
    </subcellularLocation>
</comment>
<name>Y614_PYRHO</name>
<protein>
    <recommendedName>
        <fullName>Uncharacterized protein PH0614</fullName>
    </recommendedName>
</protein>
<reference key="1">
    <citation type="journal article" date="1998" name="DNA Res.">
        <title>Complete sequence and gene organization of the genome of a hyper-thermophilic archaebacterium, Pyrococcus horikoshii OT3.</title>
        <authorList>
            <person name="Kawarabayasi Y."/>
            <person name="Sawada M."/>
            <person name="Horikawa H."/>
            <person name="Haikawa Y."/>
            <person name="Hino Y."/>
            <person name="Yamamoto S."/>
            <person name="Sekine M."/>
            <person name="Baba S."/>
            <person name="Kosugi H."/>
            <person name="Hosoyama A."/>
            <person name="Nagai Y."/>
            <person name="Sakai M."/>
            <person name="Ogura K."/>
            <person name="Otsuka R."/>
            <person name="Nakazawa H."/>
            <person name="Takamiya M."/>
            <person name="Ohfuku Y."/>
            <person name="Funahashi T."/>
            <person name="Tanaka T."/>
            <person name="Kudoh Y."/>
            <person name="Yamazaki J."/>
            <person name="Kushida N."/>
            <person name="Oguchi A."/>
            <person name="Aoki K."/>
            <person name="Yoshizawa T."/>
            <person name="Nakamura Y."/>
            <person name="Robb F.T."/>
            <person name="Horikoshi K."/>
            <person name="Masuchi Y."/>
            <person name="Shizuya H."/>
            <person name="Kikuchi H."/>
        </authorList>
    </citation>
    <scope>NUCLEOTIDE SEQUENCE [LARGE SCALE GENOMIC DNA]</scope>
    <source>
        <strain>ATCC 700860 / DSM 12428 / JCM 9974 / NBRC 100139 / OT-3</strain>
    </source>
</reference>
<feature type="signal peptide" evidence="1">
    <location>
        <begin position="1"/>
        <end position="23"/>
    </location>
</feature>
<feature type="chain" id="PRO_0000014218" description="Uncharacterized protein PH0614">
    <location>
        <begin position="24"/>
        <end position="332"/>
    </location>
</feature>
<feature type="transmembrane region" description="Helical" evidence="1">
    <location>
        <begin position="231"/>
        <end position="251"/>
    </location>
</feature>
<gene>
    <name type="ordered locus">PH0614</name>
</gene>
<proteinExistence type="inferred from homology"/>
<sequence length="332" mass="37363">MKRIPSLIIGLLLILATWHSVLAINDNYDLIIVRNDDLIDYLISLPYSHLINAPILPVNPKELDPVTKAQLYSYIQLGRDKVLIIGNTNAVSLDVEKELRDMGFSVTRIGGADRAETAEKLALHFYQNGSKVVILASAWDYGSTLAAAEFAMEYKCPILLTWENQLSPSALRGIEKLNAKIVILVGFGINETIEKTLEGMGYETYWIGRDIEPPPIETTTSSPPQSSGSKSFFLGMIVTLIILAPVILYLWRRRSERMSEFLEQFNEKELAVLKAIMERGGEVKQEDLPRIVGYSRPTISRIVQDLEKKGIVEREKSGKTFIVRVIKKIKID</sequence>
<evidence type="ECO:0000255" key="1"/>
<evidence type="ECO:0000305" key="2"/>
<dbReference type="EMBL" id="BA000001">
    <property type="protein sequence ID" value="BAA29703.1"/>
    <property type="molecule type" value="Genomic_DNA"/>
</dbReference>
<dbReference type="PIR" id="E71105">
    <property type="entry name" value="E71105"/>
</dbReference>
<dbReference type="RefSeq" id="WP_010884713.1">
    <property type="nucleotide sequence ID" value="NC_000961.1"/>
</dbReference>
<dbReference type="SMR" id="O58348"/>
<dbReference type="STRING" id="70601.gene:9377555"/>
<dbReference type="EnsemblBacteria" id="BAA29703">
    <property type="protein sequence ID" value="BAA29703"/>
    <property type="gene ID" value="BAA29703"/>
</dbReference>
<dbReference type="GeneID" id="1442947"/>
<dbReference type="KEGG" id="pho:PH0614"/>
<dbReference type="eggNOG" id="arCOG00395">
    <property type="taxonomic scope" value="Archaea"/>
</dbReference>
<dbReference type="OrthoDB" id="85590at2157"/>
<dbReference type="Proteomes" id="UP000000752">
    <property type="component" value="Chromosome"/>
</dbReference>
<dbReference type="GO" id="GO:0016020">
    <property type="term" value="C:membrane"/>
    <property type="evidence" value="ECO:0007669"/>
    <property type="project" value="UniProtKB-SubCell"/>
</dbReference>
<dbReference type="CDD" id="cd00090">
    <property type="entry name" value="HTH_ARSR"/>
    <property type="match status" value="1"/>
</dbReference>
<dbReference type="Gene3D" id="1.10.10.10">
    <property type="entry name" value="Winged helix-like DNA-binding domain superfamily/Winged helix DNA-binding domain"/>
    <property type="match status" value="1"/>
</dbReference>
<dbReference type="InterPro" id="IPR011991">
    <property type="entry name" value="ArsR-like_HTH"/>
</dbReference>
<dbReference type="InterPro" id="IPR051922">
    <property type="entry name" value="Bact_Sporulation_Assoc"/>
</dbReference>
<dbReference type="InterPro" id="IPR007253">
    <property type="entry name" value="Cell_wall-bd_2"/>
</dbReference>
<dbReference type="InterPro" id="IPR055767">
    <property type="entry name" value="DUF7343"/>
</dbReference>
<dbReference type="InterPro" id="IPR036388">
    <property type="entry name" value="WH-like_DNA-bd_sf"/>
</dbReference>
<dbReference type="InterPro" id="IPR036390">
    <property type="entry name" value="WH_DNA-bd_sf"/>
</dbReference>
<dbReference type="PANTHER" id="PTHR30032:SF4">
    <property type="entry name" value="AMIDASE ENHANCER"/>
    <property type="match status" value="1"/>
</dbReference>
<dbReference type="PANTHER" id="PTHR30032">
    <property type="entry name" value="N-ACETYLMURAMOYL-L-ALANINE AMIDASE-RELATED"/>
    <property type="match status" value="1"/>
</dbReference>
<dbReference type="Pfam" id="PF04122">
    <property type="entry name" value="CW_binding_2"/>
    <property type="match status" value="1"/>
</dbReference>
<dbReference type="Pfam" id="PF24034">
    <property type="entry name" value="DUF7343"/>
    <property type="match status" value="1"/>
</dbReference>
<dbReference type="SUPFAM" id="SSF46785">
    <property type="entry name" value="Winged helix' DNA-binding domain"/>
    <property type="match status" value="1"/>
</dbReference>
<organism>
    <name type="scientific">Pyrococcus horikoshii (strain ATCC 700860 / DSM 12428 / JCM 9974 / NBRC 100139 / OT-3)</name>
    <dbReference type="NCBI Taxonomy" id="70601"/>
    <lineage>
        <taxon>Archaea</taxon>
        <taxon>Methanobacteriati</taxon>
        <taxon>Methanobacteriota</taxon>
        <taxon>Thermococci</taxon>
        <taxon>Thermococcales</taxon>
        <taxon>Thermococcaceae</taxon>
        <taxon>Pyrococcus</taxon>
    </lineage>
</organism>
<accession>O58348</accession>
<keyword id="KW-0472">Membrane</keyword>
<keyword id="KW-0732">Signal</keyword>
<keyword id="KW-0812">Transmembrane</keyword>
<keyword id="KW-1133">Transmembrane helix</keyword>